<protein>
    <recommendedName>
        <fullName>Putative aspergillopepsin A-like aspartic endopeptidase AFUA_2G15950</fullName>
        <ecNumber>3.4.23.-</ecNumber>
    </recommendedName>
</protein>
<name>Y5950_ASPFU</name>
<sequence>MHSLQSFLFLLLLGYGVFAAPTSPQAQSQGRSFKVERIKRGNSIHGPTALRRAYRKFGIVPTTFGVDLSDFVPFNTTSISGTAANLVTDVQEPEQTGAVSAQSVQNDAAFVSPVTIGGQKIVMNFDTGSADFWVMNTELPASAQVGHTVFDPSKSSTFKKMEGATFEIKYGDSSFANGGVGTDTVDIGGATVTGQAIGIPTSVSNSFVEDTYSNGLVGLGFSSLNTVQPQQQKTFFDNIADSLDKPVMTAHLKSDGVGEYEFGIIDQTKYQGDMINVTVDSSGGFWQFQSAHYKVGDGPIQTIQNNAVAIADTGTSLMLLDDTVVNAYYAQVKGAQYASSAGGYIYPCNTELPNLAVAVGAKHLATVPGTFLDFAEVGINKTTGQTVCFGGIQSNQGTSMQILGDVFLKAFFVVFDLRGPSIGLASPK</sequence>
<feature type="signal peptide" evidence="2">
    <location>
        <begin position="1"/>
        <end position="19"/>
    </location>
</feature>
<feature type="propeptide" id="PRO_0000390768" description="Activation peptide" evidence="1">
    <location>
        <begin position="20"/>
        <end position="90"/>
    </location>
</feature>
<feature type="chain" id="PRO_0000390769" description="Putative aspergillopepsin A-like aspartic endopeptidase AFUA_2G15950">
    <location>
        <begin position="91"/>
        <end position="428"/>
    </location>
</feature>
<feature type="domain" description="Peptidase A1" evidence="3">
    <location>
        <begin position="110"/>
        <end position="425"/>
    </location>
</feature>
<feature type="active site" evidence="4">
    <location>
        <position position="126"/>
    </location>
</feature>
<feature type="active site" evidence="4">
    <location>
        <position position="312"/>
    </location>
</feature>
<feature type="glycosylation site" description="N-linked (GlcNAc...) asparagine" evidence="2">
    <location>
        <position position="276"/>
    </location>
</feature>
<feature type="glycosylation site" description="N-linked (GlcNAc...) asparagine" evidence="2">
    <location>
        <position position="380"/>
    </location>
</feature>
<dbReference type="EC" id="3.4.23.-"/>
<dbReference type="EMBL" id="AAHF01000001">
    <property type="protein sequence ID" value="EAL93892.2"/>
    <property type="molecule type" value="Genomic_DNA"/>
</dbReference>
<dbReference type="RefSeq" id="XP_755930.2">
    <property type="nucleotide sequence ID" value="XM_750837.2"/>
</dbReference>
<dbReference type="SMR" id="Q4WZS3"/>
<dbReference type="MEROPS" id="A01.079"/>
<dbReference type="EnsemblFungi" id="EAL93892">
    <property type="protein sequence ID" value="EAL93892"/>
    <property type="gene ID" value="AFUA_2G15950"/>
</dbReference>
<dbReference type="GeneID" id="3513104"/>
<dbReference type="KEGG" id="afm:AFUA_2G15950"/>
<dbReference type="VEuPathDB" id="FungiDB:Afu2g15950"/>
<dbReference type="eggNOG" id="KOG1339">
    <property type="taxonomic scope" value="Eukaryota"/>
</dbReference>
<dbReference type="HOGENOM" id="CLU_013253_0_1_1"/>
<dbReference type="InParanoid" id="Q4WZS3"/>
<dbReference type="OMA" id="NGVGEYE"/>
<dbReference type="OrthoDB" id="2747330at2759"/>
<dbReference type="Proteomes" id="UP000002530">
    <property type="component" value="Chromosome 2"/>
</dbReference>
<dbReference type="GO" id="GO:0005576">
    <property type="term" value="C:extracellular region"/>
    <property type="evidence" value="ECO:0007669"/>
    <property type="project" value="UniProtKB-SubCell"/>
</dbReference>
<dbReference type="GO" id="GO:0004190">
    <property type="term" value="F:aspartic-type endopeptidase activity"/>
    <property type="evidence" value="ECO:0000318"/>
    <property type="project" value="GO_Central"/>
</dbReference>
<dbReference type="GO" id="GO:0006508">
    <property type="term" value="P:proteolysis"/>
    <property type="evidence" value="ECO:0000318"/>
    <property type="project" value="GO_Central"/>
</dbReference>
<dbReference type="CDD" id="cd06097">
    <property type="entry name" value="Aspergillopepsin_like"/>
    <property type="match status" value="1"/>
</dbReference>
<dbReference type="FunFam" id="2.40.70.10:FF:000024">
    <property type="entry name" value="Endothiapepsin"/>
    <property type="match status" value="1"/>
</dbReference>
<dbReference type="FunFam" id="2.40.70.10:FF:000026">
    <property type="entry name" value="Endothiapepsin"/>
    <property type="match status" value="1"/>
</dbReference>
<dbReference type="Gene3D" id="2.40.70.10">
    <property type="entry name" value="Acid Proteases"/>
    <property type="match status" value="2"/>
</dbReference>
<dbReference type="InterPro" id="IPR001461">
    <property type="entry name" value="Aspartic_peptidase_A1"/>
</dbReference>
<dbReference type="InterPro" id="IPR001969">
    <property type="entry name" value="Aspartic_peptidase_AS"/>
</dbReference>
<dbReference type="InterPro" id="IPR034163">
    <property type="entry name" value="Aspergillopepsin-like_cat_dom"/>
</dbReference>
<dbReference type="InterPro" id="IPR033121">
    <property type="entry name" value="PEPTIDASE_A1"/>
</dbReference>
<dbReference type="InterPro" id="IPR021109">
    <property type="entry name" value="Peptidase_aspartic_dom_sf"/>
</dbReference>
<dbReference type="PANTHER" id="PTHR47966:SF23">
    <property type="entry name" value="ASPARTIC ENDOPEPTIDASE, PUTATIVE (AFU_ORTHOLOGUE AFUA_2G15950)-RELATED"/>
    <property type="match status" value="1"/>
</dbReference>
<dbReference type="PANTHER" id="PTHR47966">
    <property type="entry name" value="BETA-SITE APP-CLEAVING ENZYME, ISOFORM A-RELATED"/>
    <property type="match status" value="1"/>
</dbReference>
<dbReference type="Pfam" id="PF00026">
    <property type="entry name" value="Asp"/>
    <property type="match status" value="1"/>
</dbReference>
<dbReference type="PRINTS" id="PR00792">
    <property type="entry name" value="PEPSIN"/>
</dbReference>
<dbReference type="SUPFAM" id="SSF50630">
    <property type="entry name" value="Acid proteases"/>
    <property type="match status" value="1"/>
</dbReference>
<dbReference type="PROSITE" id="PS00141">
    <property type="entry name" value="ASP_PROTEASE"/>
    <property type="match status" value="2"/>
</dbReference>
<dbReference type="PROSITE" id="PS51767">
    <property type="entry name" value="PEPTIDASE_A1"/>
    <property type="match status" value="1"/>
</dbReference>
<organism>
    <name type="scientific">Aspergillus fumigatus (strain ATCC MYA-4609 / CBS 101355 / FGSC A1100 / Af293)</name>
    <name type="common">Neosartorya fumigata</name>
    <dbReference type="NCBI Taxonomy" id="330879"/>
    <lineage>
        <taxon>Eukaryota</taxon>
        <taxon>Fungi</taxon>
        <taxon>Dikarya</taxon>
        <taxon>Ascomycota</taxon>
        <taxon>Pezizomycotina</taxon>
        <taxon>Eurotiomycetes</taxon>
        <taxon>Eurotiomycetidae</taxon>
        <taxon>Eurotiales</taxon>
        <taxon>Aspergillaceae</taxon>
        <taxon>Aspergillus</taxon>
        <taxon>Aspergillus subgen. Fumigati</taxon>
    </lineage>
</organism>
<evidence type="ECO:0000250" key="1"/>
<evidence type="ECO:0000255" key="2"/>
<evidence type="ECO:0000255" key="3">
    <source>
        <dbReference type="PROSITE-ProRule" id="PRU01103"/>
    </source>
</evidence>
<evidence type="ECO:0000255" key="4">
    <source>
        <dbReference type="PROSITE-ProRule" id="PRU10094"/>
    </source>
</evidence>
<evidence type="ECO:0000305" key="5"/>
<proteinExistence type="inferred from homology"/>
<reference key="1">
    <citation type="journal article" date="2005" name="Nature">
        <title>Genomic sequence of the pathogenic and allergenic filamentous fungus Aspergillus fumigatus.</title>
        <authorList>
            <person name="Nierman W.C."/>
            <person name="Pain A."/>
            <person name="Anderson M.J."/>
            <person name="Wortman J.R."/>
            <person name="Kim H.S."/>
            <person name="Arroyo J."/>
            <person name="Berriman M."/>
            <person name="Abe K."/>
            <person name="Archer D.B."/>
            <person name="Bermejo C."/>
            <person name="Bennett J.W."/>
            <person name="Bowyer P."/>
            <person name="Chen D."/>
            <person name="Collins M."/>
            <person name="Coulsen R."/>
            <person name="Davies R."/>
            <person name="Dyer P.S."/>
            <person name="Farman M.L."/>
            <person name="Fedorova N."/>
            <person name="Fedorova N.D."/>
            <person name="Feldblyum T.V."/>
            <person name="Fischer R."/>
            <person name="Fosker N."/>
            <person name="Fraser A."/>
            <person name="Garcia J.L."/>
            <person name="Garcia M.J."/>
            <person name="Goble A."/>
            <person name="Goldman G.H."/>
            <person name="Gomi K."/>
            <person name="Griffith-Jones S."/>
            <person name="Gwilliam R."/>
            <person name="Haas B.J."/>
            <person name="Haas H."/>
            <person name="Harris D.E."/>
            <person name="Horiuchi H."/>
            <person name="Huang J."/>
            <person name="Humphray S."/>
            <person name="Jimenez J."/>
            <person name="Keller N."/>
            <person name="Khouri H."/>
            <person name="Kitamoto K."/>
            <person name="Kobayashi T."/>
            <person name="Konzack S."/>
            <person name="Kulkarni R."/>
            <person name="Kumagai T."/>
            <person name="Lafton A."/>
            <person name="Latge J.-P."/>
            <person name="Li W."/>
            <person name="Lord A."/>
            <person name="Lu C."/>
            <person name="Majoros W.H."/>
            <person name="May G.S."/>
            <person name="Miller B.L."/>
            <person name="Mohamoud Y."/>
            <person name="Molina M."/>
            <person name="Monod M."/>
            <person name="Mouyna I."/>
            <person name="Mulligan S."/>
            <person name="Murphy L.D."/>
            <person name="O'Neil S."/>
            <person name="Paulsen I."/>
            <person name="Penalva M.A."/>
            <person name="Pertea M."/>
            <person name="Price C."/>
            <person name="Pritchard B.L."/>
            <person name="Quail M.A."/>
            <person name="Rabbinowitsch E."/>
            <person name="Rawlins N."/>
            <person name="Rajandream M.A."/>
            <person name="Reichard U."/>
            <person name="Renauld H."/>
            <person name="Robson G.D."/>
            <person name="Rodriguez de Cordoba S."/>
            <person name="Rodriguez-Pena J.M."/>
            <person name="Ronning C.M."/>
            <person name="Rutter S."/>
            <person name="Salzberg S.L."/>
            <person name="Sanchez M."/>
            <person name="Sanchez-Ferrero J.C."/>
            <person name="Saunders D."/>
            <person name="Seeger K."/>
            <person name="Squares R."/>
            <person name="Squares S."/>
            <person name="Takeuchi M."/>
            <person name="Tekaia F."/>
            <person name="Turner G."/>
            <person name="Vazquez de Aldana C.R."/>
            <person name="Weidman J."/>
            <person name="White O."/>
            <person name="Woodward J.R."/>
            <person name="Yu J.-H."/>
            <person name="Fraser C.M."/>
            <person name="Galagan J.E."/>
            <person name="Asai K."/>
            <person name="Machida M."/>
            <person name="Hall N."/>
            <person name="Barrell B.G."/>
            <person name="Denning D.W."/>
        </authorList>
    </citation>
    <scope>NUCLEOTIDE SEQUENCE [LARGE SCALE GENOMIC DNA]</scope>
    <source>
        <strain>ATCC MYA-4609 / CBS 101355 / FGSC A1100 / Af293</strain>
    </source>
</reference>
<keyword id="KW-0064">Aspartyl protease</keyword>
<keyword id="KW-0325">Glycoprotein</keyword>
<keyword id="KW-0378">Hydrolase</keyword>
<keyword id="KW-0645">Protease</keyword>
<keyword id="KW-1185">Reference proteome</keyword>
<keyword id="KW-0964">Secreted</keyword>
<keyword id="KW-0732">Signal</keyword>
<keyword id="KW-0865">Zymogen</keyword>
<gene>
    <name type="ORF">AFUA_2G15950</name>
</gene>
<accession>Q4WZS3</accession>
<comment type="subcellular location">
    <subcellularLocation>
        <location evidence="5">Secreted</location>
    </subcellularLocation>
</comment>
<comment type="similarity">
    <text evidence="5">Belongs to the peptidase A1 family.</text>
</comment>